<evidence type="ECO:0000255" key="1">
    <source>
        <dbReference type="PROSITE-ProRule" id="PRU00711"/>
    </source>
</evidence>
<evidence type="ECO:0007829" key="2">
    <source>
        <dbReference type="PDB" id="1IQZ"/>
    </source>
</evidence>
<name>FER_BACTH</name>
<protein>
    <recommendedName>
        <fullName>Ferredoxin</fullName>
    </recommendedName>
</protein>
<keyword id="KW-0002">3D-structure</keyword>
<keyword id="KW-0004">4Fe-4S</keyword>
<keyword id="KW-0249">Electron transport</keyword>
<keyword id="KW-0408">Iron</keyword>
<keyword id="KW-0411">Iron-sulfur</keyword>
<keyword id="KW-0479">Metal-binding</keyword>
<keyword id="KW-0813">Transport</keyword>
<reference key="1">
    <citation type="journal article" date="1988" name="J. Mol. Biol.">
        <title>Tertiary structure of Bacillus thermoproteolyticus [4Fe-4S] ferredoxin. Evolutionary implications for bacterial ferredoxins.</title>
        <authorList>
            <person name="Fukuyama K."/>
            <person name="Nagahara Y."/>
            <person name="Tsukihara T."/>
            <person name="Katsube Y."/>
            <person name="Hase T."/>
            <person name="Matsubara H."/>
        </authorList>
    </citation>
    <scope>X-RAY CRYSTALLOGRAPHY (2.3 ANGSTROMS)</scope>
</reference>
<reference key="2">
    <citation type="journal article" date="1989" name="J. Mol. Biol.">
        <title>Structure of [4Fe-4S] ferredoxin from Bacillus thermoproteolyticus refined at 2.3-A resolution. Structural comparisons of bacterial ferredoxins.</title>
        <authorList>
            <person name="Fukuyama K."/>
            <person name="Matsubara H."/>
            <person name="Tsukihara T."/>
            <person name="Katsube Y."/>
        </authorList>
    </citation>
    <scope>X-RAY CRYSTALLOGRAPHY (2.3 ANGSTROMS)</scope>
</reference>
<reference key="3">
    <citation type="journal article" date="2002" name="J. Mol. Biol.">
        <title>Atomic resolution structures of oxidized [4Fe-4S] ferredoxin from Bacillus thermoproteolyticus in two crystal forms: systematic distortion of [4Fe-4S] cluster in the protein.</title>
        <authorList>
            <person name="Fukuyama K."/>
            <person name="Okada T."/>
            <person name="Kakuta Y."/>
            <person name="Takahashi Y."/>
        </authorList>
    </citation>
    <scope>X-RAY CRYSTALLOGRAPHY (0.92 ANGSTROMS)</scope>
</reference>
<feature type="chain" id="PRO_0000159192" description="Ferredoxin">
    <location>
        <begin position="1"/>
        <end position="81"/>
    </location>
</feature>
<feature type="domain" description="4Fe-4S ferredoxin-type" evidence="1">
    <location>
        <begin position="2"/>
        <end position="30"/>
    </location>
</feature>
<feature type="binding site">
    <location>
        <position position="11"/>
    </location>
    <ligand>
        <name>[4Fe-4S] cluster</name>
        <dbReference type="ChEBI" id="CHEBI:49883"/>
    </ligand>
</feature>
<feature type="binding site">
    <location>
        <position position="14"/>
    </location>
    <ligand>
        <name>[4Fe-4S] cluster</name>
        <dbReference type="ChEBI" id="CHEBI:49883"/>
    </ligand>
</feature>
<feature type="binding site">
    <location>
        <position position="17"/>
    </location>
    <ligand>
        <name>[4Fe-4S] cluster</name>
        <dbReference type="ChEBI" id="CHEBI:49883"/>
    </ligand>
</feature>
<feature type="binding site">
    <location>
        <position position="61"/>
    </location>
    <ligand>
        <name>[4Fe-4S] cluster</name>
        <dbReference type="ChEBI" id="CHEBI:49883"/>
    </ligand>
</feature>
<feature type="strand" evidence="2">
    <location>
        <begin position="3"/>
        <end position="6"/>
    </location>
</feature>
<feature type="turn" evidence="2">
    <location>
        <begin position="8"/>
        <end position="10"/>
    </location>
</feature>
<feature type="helix" evidence="2">
    <location>
        <begin position="16"/>
        <end position="20"/>
    </location>
</feature>
<feature type="turn" evidence="2">
    <location>
        <begin position="22"/>
        <end position="24"/>
    </location>
</feature>
<feature type="strand" evidence="2">
    <location>
        <begin position="25"/>
        <end position="27"/>
    </location>
</feature>
<feature type="strand" evidence="2">
    <location>
        <begin position="33"/>
        <end position="35"/>
    </location>
</feature>
<feature type="turn" evidence="2">
    <location>
        <begin position="36"/>
        <end position="40"/>
    </location>
</feature>
<feature type="helix" evidence="2">
    <location>
        <begin position="48"/>
        <end position="50"/>
    </location>
</feature>
<feature type="helix" evidence="2">
    <location>
        <begin position="51"/>
        <end position="60"/>
    </location>
</feature>
<feature type="strand" evidence="2">
    <location>
        <begin position="66"/>
        <end position="71"/>
    </location>
</feature>
<feature type="turn" evidence="2">
    <location>
        <begin position="77"/>
        <end position="80"/>
    </location>
</feature>
<accession>P10245</accession>
<dbReference type="PIR" id="A55790">
    <property type="entry name" value="A55790"/>
</dbReference>
<dbReference type="PDB" id="1IQZ">
    <property type="method" value="X-ray"/>
    <property type="resolution" value="0.92 A"/>
    <property type="chains" value="A=1-81"/>
</dbReference>
<dbReference type="PDB" id="1IR0">
    <property type="method" value="X-ray"/>
    <property type="resolution" value="1.00 A"/>
    <property type="chains" value="A=1-81"/>
</dbReference>
<dbReference type="PDB" id="1WTF">
    <property type="method" value="X-ray"/>
    <property type="resolution" value="1.60 A"/>
    <property type="chains" value="A/B/C/D=1-81"/>
</dbReference>
<dbReference type="PDB" id="7YL8">
    <property type="method" value="Other"/>
    <property type="resolution" value="1.45 A"/>
    <property type="chains" value="A=1-81"/>
</dbReference>
<dbReference type="PDBsum" id="1IQZ"/>
<dbReference type="PDBsum" id="1IR0"/>
<dbReference type="PDBsum" id="1WTF"/>
<dbReference type="PDBsum" id="7YL8"/>
<dbReference type="SMR" id="P10245"/>
<dbReference type="EvolutionaryTrace" id="P10245"/>
<dbReference type="GO" id="GO:0051539">
    <property type="term" value="F:4 iron, 4 sulfur cluster binding"/>
    <property type="evidence" value="ECO:0007669"/>
    <property type="project" value="UniProtKB-KW"/>
</dbReference>
<dbReference type="GO" id="GO:0009055">
    <property type="term" value="F:electron transfer activity"/>
    <property type="evidence" value="ECO:0007669"/>
    <property type="project" value="InterPro"/>
</dbReference>
<dbReference type="GO" id="GO:0005506">
    <property type="term" value="F:iron ion binding"/>
    <property type="evidence" value="ECO:0007669"/>
    <property type="project" value="InterPro"/>
</dbReference>
<dbReference type="FunFam" id="3.30.70.20:FF:000011">
    <property type="entry name" value="Ferredoxin"/>
    <property type="match status" value="1"/>
</dbReference>
<dbReference type="Gene3D" id="3.30.70.20">
    <property type="match status" value="1"/>
</dbReference>
<dbReference type="InterPro" id="IPR001080">
    <property type="entry name" value="3Fe4S_ferredoxin"/>
</dbReference>
<dbReference type="InterPro" id="IPR017896">
    <property type="entry name" value="4Fe4S_Fe-S-bd"/>
</dbReference>
<dbReference type="InterPro" id="IPR052395">
    <property type="entry name" value="ET_Ferredoxin"/>
</dbReference>
<dbReference type="PANTHER" id="PTHR39163">
    <property type="entry name" value="FERREDOXIN"/>
    <property type="match status" value="1"/>
</dbReference>
<dbReference type="PANTHER" id="PTHR39163:SF1">
    <property type="entry name" value="FERREDOXIN"/>
    <property type="match status" value="1"/>
</dbReference>
<dbReference type="Pfam" id="PF13370">
    <property type="entry name" value="Fer4_13"/>
    <property type="match status" value="1"/>
</dbReference>
<dbReference type="PRINTS" id="PR00352">
    <property type="entry name" value="3FE4SFRDOXIN"/>
</dbReference>
<dbReference type="SUPFAM" id="SSF54862">
    <property type="entry name" value="4Fe-4S ferredoxins"/>
    <property type="match status" value="1"/>
</dbReference>
<dbReference type="PROSITE" id="PS51379">
    <property type="entry name" value="4FE4S_FER_2"/>
    <property type="match status" value="1"/>
</dbReference>
<organism>
    <name type="scientific">Bacillus thermoproteolyticus</name>
    <dbReference type="NCBI Taxonomy" id="1427"/>
    <lineage>
        <taxon>Bacteria</taxon>
        <taxon>Bacillati</taxon>
        <taxon>Bacillota</taxon>
        <taxon>Bacilli</taxon>
        <taxon>Bacillales</taxon>
        <taxon>Bacillaceae</taxon>
        <taxon>Bacillus</taxon>
    </lineage>
</organism>
<proteinExistence type="evidence at protein level"/>
<sequence>PKYTIVDKETCIACGACGAAAPDIYDYDEDGIAYVTLDDNQGIVEVPDILIDDMMDAFEGCPTDSIKVADEPFDGDPNKFE</sequence>
<comment type="function">
    <text>Ferredoxins are iron-sulfur proteins that transfer electrons in a wide variety of metabolic reactions.</text>
</comment>
<comment type="cofactor">
    <cofactor>
        <name>[4Fe-4S] cluster</name>
        <dbReference type="ChEBI" id="CHEBI:49883"/>
    </cofactor>
    <text>Binds 1 [4Fe-4S] cluster.</text>
</comment>